<name>VIRB3_BRUSU</name>
<keyword id="KW-1003">Cell membrane</keyword>
<keyword id="KW-0472">Membrane</keyword>
<keyword id="KW-0812">Transmembrane</keyword>
<keyword id="KW-1133">Transmembrane helix</keyword>
<keyword id="KW-0843">Virulence</keyword>
<sequence length="116" mass="13082">MTTAPQESNARSAGYRGDPIFKGCTRPAMLFGVPVIPLVIVGGSIVLLSVWISMFILPLIVPIVLVMRQITQTDDQMFRLLGLKAQFRLIHFNRTGRFWRASAYSPIAFTKRKRES</sequence>
<organism>
    <name type="scientific">Brucella suis biovar 1 (strain 1330)</name>
    <dbReference type="NCBI Taxonomy" id="204722"/>
    <lineage>
        <taxon>Bacteria</taxon>
        <taxon>Pseudomonadati</taxon>
        <taxon>Pseudomonadota</taxon>
        <taxon>Alphaproteobacteria</taxon>
        <taxon>Hyphomicrobiales</taxon>
        <taxon>Brucellaceae</taxon>
        <taxon>Brucella/Ochrobactrum group</taxon>
        <taxon>Brucella</taxon>
    </lineage>
</organism>
<gene>
    <name type="primary">virB3</name>
    <name type="ordered locus">BRA0067</name>
    <name type="ordered locus">BS1330_II0067</name>
</gene>
<comment type="function">
    <text>The VirB system could be required for the establishment of the replication niche in the host.</text>
</comment>
<comment type="subcellular location">
    <subcellularLocation>
        <location evidence="2">Cell membrane</location>
        <topology evidence="2">Multi-pass membrane protein</topology>
    </subcellularLocation>
</comment>
<comment type="induction">
    <text>Specifically induced within macrophages by phagosome acidification. Induced at 37 degrees Celsius in minimal medium, suggesting that nutritional stress is a regulating signal.</text>
</comment>
<comment type="miscellaneous">
    <text>Transcription of the operon is maximal in early exponential phase.</text>
</comment>
<comment type="similarity">
    <text evidence="2">Belongs to the virB3 family.</text>
</comment>
<proteinExistence type="evidence at transcript level"/>
<accession>Q7CEG1</accession>
<accession>G0KER5</accession>
<accession>Q7BQL6</accession>
<reference key="1">
    <citation type="journal article" date="1999" name="Mol. Microbiol.">
        <title>A homologue of the Agrobacterium tumefaciens VirB and Bordetella pertussis Ptl type IV secretion systems is essential for intracellular survival of Brucella suis.</title>
        <authorList>
            <person name="O'Callaghan D."/>
            <person name="Cazevieille C."/>
            <person name="Allardet-Servent A."/>
            <person name="Boschiroli M.L."/>
            <person name="Bourg G."/>
            <person name="Foulongne V."/>
            <person name="Frutos P."/>
            <person name="Kulakov Y."/>
            <person name="Ramuz M."/>
        </authorList>
    </citation>
    <scope>NUCLEOTIDE SEQUENCE [GENOMIC DNA]</scope>
    <source>
        <strain>1330</strain>
    </source>
</reference>
<reference key="2">
    <citation type="journal article" date="2002" name="Proc. Natl. Acad. Sci. U.S.A.">
        <title>The Brucella suis virB operon is induced intracellularly in macrophages.</title>
        <authorList>
            <person name="Boschiroli M.L."/>
            <person name="Ouahrani-Bettache S."/>
            <person name="Foulongne V."/>
            <person name="Michaux-Charachon S."/>
            <person name="Bourg G."/>
            <person name="Allardet-Servent A."/>
            <person name="Cazevieille C."/>
            <person name="Liautard J.P."/>
            <person name="Ramuz M."/>
            <person name="O'Callaghan D."/>
        </authorList>
    </citation>
    <scope>NUCLEOTIDE SEQUENCE [GENOMIC DNA]</scope>
    <scope>EXPRESSION CONDITIONS</scope>
    <source>
        <strain>1330</strain>
    </source>
</reference>
<reference key="3">
    <citation type="journal article" date="2002" name="Proc. Natl. Acad. Sci. U.S.A.">
        <title>The Brucella suis genome reveals fundamental similarities between animal and plant pathogens and symbionts.</title>
        <authorList>
            <person name="Paulsen I.T."/>
            <person name="Seshadri R."/>
            <person name="Nelson K.E."/>
            <person name="Eisen J.A."/>
            <person name="Heidelberg J.F."/>
            <person name="Read T.D."/>
            <person name="Dodson R.J."/>
            <person name="Umayam L.A."/>
            <person name="Brinkac L.M."/>
            <person name="Beanan M.J."/>
            <person name="Daugherty S.C."/>
            <person name="DeBoy R.T."/>
            <person name="Durkin A.S."/>
            <person name="Kolonay J.F."/>
            <person name="Madupu R."/>
            <person name="Nelson W.C."/>
            <person name="Ayodeji B."/>
            <person name="Kraul M."/>
            <person name="Shetty J."/>
            <person name="Malek J.A."/>
            <person name="Van Aken S.E."/>
            <person name="Riedmuller S."/>
            <person name="Tettelin H."/>
            <person name="Gill S.R."/>
            <person name="White O."/>
            <person name="Salzberg S.L."/>
            <person name="Hoover D.L."/>
            <person name="Lindler L.E."/>
            <person name="Halling S.M."/>
            <person name="Boyle S.M."/>
            <person name="Fraser C.M."/>
        </authorList>
    </citation>
    <scope>NUCLEOTIDE SEQUENCE [LARGE SCALE GENOMIC DNA]</scope>
    <source>
        <strain>1330</strain>
    </source>
</reference>
<reference key="4">
    <citation type="journal article" date="2011" name="J. Bacteriol.">
        <title>Revised genome sequence of Brucella suis 1330.</title>
        <authorList>
            <person name="Tae H."/>
            <person name="Shallom S."/>
            <person name="Settlage R."/>
            <person name="Preston D."/>
            <person name="Adams L.G."/>
            <person name="Garner H.R."/>
        </authorList>
    </citation>
    <scope>NUCLEOTIDE SEQUENCE [LARGE SCALE GENOMIC DNA]</scope>
    <source>
        <strain>1330</strain>
    </source>
</reference>
<dbReference type="EMBL" id="AF141604">
    <property type="protein sequence ID" value="AAD56613.1"/>
    <property type="molecule type" value="Genomic_DNA"/>
</dbReference>
<dbReference type="EMBL" id="AE014292">
    <property type="protein sequence ID" value="AAN33279.1"/>
    <property type="molecule type" value="Genomic_DNA"/>
</dbReference>
<dbReference type="EMBL" id="CP002998">
    <property type="protein sequence ID" value="AEM19559.1"/>
    <property type="molecule type" value="Genomic_DNA"/>
</dbReference>
<dbReference type="RefSeq" id="WP_002966512.1">
    <property type="nucleotide sequence ID" value="NZ_KN046805.1"/>
</dbReference>
<dbReference type="SMR" id="Q7CEG1"/>
<dbReference type="KEGG" id="bms:BRA0067"/>
<dbReference type="KEGG" id="bsi:BS1330_II0067"/>
<dbReference type="PATRIC" id="fig|204722.21.peg.2303"/>
<dbReference type="HOGENOM" id="CLU_158477_0_0_5"/>
<dbReference type="PRO" id="PR:Q7CEG1"/>
<dbReference type="Proteomes" id="UP000007104">
    <property type="component" value="Chromosome II"/>
</dbReference>
<dbReference type="GO" id="GO:0005886">
    <property type="term" value="C:plasma membrane"/>
    <property type="evidence" value="ECO:0007669"/>
    <property type="project" value="UniProtKB-SubCell"/>
</dbReference>
<dbReference type="InterPro" id="IPR007792">
    <property type="entry name" value="T4SS_VirB3/TrbD/AvhB"/>
</dbReference>
<dbReference type="Pfam" id="PF05101">
    <property type="entry name" value="VirB3"/>
    <property type="match status" value="1"/>
</dbReference>
<feature type="chain" id="PRO_0000290175" description="Type IV secretion system protein virB3">
    <location>
        <begin position="1"/>
        <end position="116"/>
    </location>
</feature>
<feature type="transmembrane region" description="Helical" evidence="1">
    <location>
        <begin position="23"/>
        <end position="43"/>
    </location>
</feature>
<feature type="transmembrane region" description="Helical" evidence="1">
    <location>
        <begin position="45"/>
        <end position="65"/>
    </location>
</feature>
<protein>
    <recommendedName>
        <fullName>Type IV secretion system protein virB3</fullName>
    </recommendedName>
</protein>
<evidence type="ECO:0000255" key="1"/>
<evidence type="ECO:0000305" key="2"/>